<accession>A8EUB2</accession>
<comment type="catalytic activity">
    <reaction evidence="1">
        <text>L-citrulline + L-aspartate + ATP = 2-(N(omega)-L-arginino)succinate + AMP + diphosphate + H(+)</text>
        <dbReference type="Rhea" id="RHEA:10932"/>
        <dbReference type="ChEBI" id="CHEBI:15378"/>
        <dbReference type="ChEBI" id="CHEBI:29991"/>
        <dbReference type="ChEBI" id="CHEBI:30616"/>
        <dbReference type="ChEBI" id="CHEBI:33019"/>
        <dbReference type="ChEBI" id="CHEBI:57472"/>
        <dbReference type="ChEBI" id="CHEBI:57743"/>
        <dbReference type="ChEBI" id="CHEBI:456215"/>
        <dbReference type="EC" id="6.3.4.5"/>
    </reaction>
</comment>
<comment type="pathway">
    <text evidence="1">Amino-acid biosynthesis; L-arginine biosynthesis; L-arginine from L-ornithine and carbamoyl phosphate: step 2/3.</text>
</comment>
<comment type="subunit">
    <text evidence="1">Homotetramer.</text>
</comment>
<comment type="subcellular location">
    <subcellularLocation>
        <location evidence="1">Cytoplasm</location>
    </subcellularLocation>
</comment>
<comment type="similarity">
    <text evidence="1">Belongs to the argininosuccinate synthase family. Type 1 subfamily.</text>
</comment>
<keyword id="KW-0028">Amino-acid biosynthesis</keyword>
<keyword id="KW-0055">Arginine biosynthesis</keyword>
<keyword id="KW-0067">ATP-binding</keyword>
<keyword id="KW-0963">Cytoplasm</keyword>
<keyword id="KW-0436">Ligase</keyword>
<keyword id="KW-0547">Nucleotide-binding</keyword>
<keyword id="KW-1185">Reference proteome</keyword>
<evidence type="ECO:0000255" key="1">
    <source>
        <dbReference type="HAMAP-Rule" id="MF_00005"/>
    </source>
</evidence>
<sequence length="413" mass="46373">MSKKDIKKVVLAYSGGLDTSIILKWLQDEYNAEVITFTADLGQGEEVEPARQKAIACGIKPENVFILDIKEEFVKDYVFPMFRANAIYEGEYLLGTSIARPLIAKKLVEIANQKGAEAVSHGATGKGNDQVRFELGALALNPDLKVIAPWREWTLNSRESLLEYAKKNGIEISQKHVDENGNPKISPYSMDANLLHISYEGLHLENPANEPEESMWLWTNSPEQAPDEAEYITIGYKNGDPISINGKELSPATLLKTLNDYGNKHGIGRVDIVENRYVGMKARGCYETPGGTIMLKAHRAIESLTLDREAAHLKDELMPRYAKLIYQGYWFSPEREMLQAAIDATQKNVEGTVRLKLYKGNVTVVGRESSKSLYDDAYSTFEKDEVYNQKDAEGFIRLNALRFIIAGKKNNKK</sequence>
<reference key="1">
    <citation type="journal article" date="2007" name="PLoS ONE">
        <title>The complete genome sequence and analysis of the Epsilonproteobacterium Arcobacter butzleri.</title>
        <authorList>
            <person name="Miller W.G."/>
            <person name="Parker C.T."/>
            <person name="Rubenfield M."/>
            <person name="Mendz G.L."/>
            <person name="Woesten M.M.S.M."/>
            <person name="Ussery D.W."/>
            <person name="Stolz J.F."/>
            <person name="Binnewies T.T."/>
            <person name="Hallin P.F."/>
            <person name="Wang G."/>
            <person name="Malek J.A."/>
            <person name="Rogosin A."/>
            <person name="Stanker L.H."/>
            <person name="Mandrell R.E."/>
        </authorList>
    </citation>
    <scope>NUCLEOTIDE SEQUENCE [LARGE SCALE GENOMIC DNA]</scope>
    <source>
        <strain>RM4018</strain>
    </source>
</reference>
<name>ASSY_ALIB4</name>
<organism>
    <name type="scientific">Aliarcobacter butzleri (strain RM4018)</name>
    <name type="common">Arcobacter butzleri</name>
    <dbReference type="NCBI Taxonomy" id="367737"/>
    <lineage>
        <taxon>Bacteria</taxon>
        <taxon>Pseudomonadati</taxon>
        <taxon>Campylobacterota</taxon>
        <taxon>Epsilonproteobacteria</taxon>
        <taxon>Campylobacterales</taxon>
        <taxon>Arcobacteraceae</taxon>
        <taxon>Aliarcobacter</taxon>
    </lineage>
</organism>
<feature type="chain" id="PRO_0000321300" description="Argininosuccinate synthase">
    <location>
        <begin position="1"/>
        <end position="413"/>
    </location>
</feature>
<feature type="binding site" evidence="1">
    <location>
        <begin position="12"/>
        <end position="20"/>
    </location>
    <ligand>
        <name>ATP</name>
        <dbReference type="ChEBI" id="CHEBI:30616"/>
    </ligand>
</feature>
<feature type="binding site" evidence="1">
    <location>
        <position position="39"/>
    </location>
    <ligand>
        <name>ATP</name>
        <dbReference type="ChEBI" id="CHEBI:30616"/>
    </ligand>
</feature>
<feature type="binding site" evidence="1">
    <location>
        <position position="92"/>
    </location>
    <ligand>
        <name>L-citrulline</name>
        <dbReference type="ChEBI" id="CHEBI:57743"/>
    </ligand>
</feature>
<feature type="binding site" evidence="1">
    <location>
        <position position="97"/>
    </location>
    <ligand>
        <name>L-citrulline</name>
        <dbReference type="ChEBI" id="CHEBI:57743"/>
    </ligand>
</feature>
<feature type="binding site" evidence="1">
    <location>
        <position position="122"/>
    </location>
    <ligand>
        <name>ATP</name>
        <dbReference type="ChEBI" id="CHEBI:30616"/>
    </ligand>
</feature>
<feature type="binding site" evidence="1">
    <location>
        <position position="124"/>
    </location>
    <ligand>
        <name>L-aspartate</name>
        <dbReference type="ChEBI" id="CHEBI:29991"/>
    </ligand>
</feature>
<feature type="binding site" evidence="1">
    <location>
        <position position="128"/>
    </location>
    <ligand>
        <name>L-aspartate</name>
        <dbReference type="ChEBI" id="CHEBI:29991"/>
    </ligand>
</feature>
<feature type="binding site" evidence="1">
    <location>
        <position position="128"/>
    </location>
    <ligand>
        <name>L-citrulline</name>
        <dbReference type="ChEBI" id="CHEBI:57743"/>
    </ligand>
</feature>
<feature type="binding site" evidence="1">
    <location>
        <position position="129"/>
    </location>
    <ligand>
        <name>L-aspartate</name>
        <dbReference type="ChEBI" id="CHEBI:29991"/>
    </ligand>
</feature>
<feature type="binding site" evidence="1">
    <location>
        <position position="132"/>
    </location>
    <ligand>
        <name>L-citrulline</name>
        <dbReference type="ChEBI" id="CHEBI:57743"/>
    </ligand>
</feature>
<feature type="binding site" evidence="1">
    <location>
        <position position="189"/>
    </location>
    <ligand>
        <name>L-citrulline</name>
        <dbReference type="ChEBI" id="CHEBI:57743"/>
    </ligand>
</feature>
<feature type="binding site" evidence="1">
    <location>
        <position position="198"/>
    </location>
    <ligand>
        <name>L-citrulline</name>
        <dbReference type="ChEBI" id="CHEBI:57743"/>
    </ligand>
</feature>
<feature type="binding site" evidence="1">
    <location>
        <position position="274"/>
    </location>
    <ligand>
        <name>L-citrulline</name>
        <dbReference type="ChEBI" id="CHEBI:57743"/>
    </ligand>
</feature>
<feature type="binding site" evidence="1">
    <location>
        <position position="286"/>
    </location>
    <ligand>
        <name>L-citrulline</name>
        <dbReference type="ChEBI" id="CHEBI:57743"/>
    </ligand>
</feature>
<gene>
    <name evidence="1" type="primary">argG</name>
    <name type="ordered locus">Abu_1279</name>
</gene>
<dbReference type="EC" id="6.3.4.5" evidence="1"/>
<dbReference type="EMBL" id="CP000361">
    <property type="protein sequence ID" value="ABV67536.1"/>
    <property type="molecule type" value="Genomic_DNA"/>
</dbReference>
<dbReference type="RefSeq" id="WP_012012952.1">
    <property type="nucleotide sequence ID" value="NC_009850.1"/>
</dbReference>
<dbReference type="SMR" id="A8EUB2"/>
<dbReference type="STRING" id="367737.Abu_1279"/>
<dbReference type="GeneID" id="24305463"/>
<dbReference type="KEGG" id="abu:Abu_1279"/>
<dbReference type="eggNOG" id="COG0137">
    <property type="taxonomic scope" value="Bacteria"/>
</dbReference>
<dbReference type="HOGENOM" id="CLU_032784_4_2_7"/>
<dbReference type="UniPathway" id="UPA00068">
    <property type="reaction ID" value="UER00113"/>
</dbReference>
<dbReference type="Proteomes" id="UP000001136">
    <property type="component" value="Chromosome"/>
</dbReference>
<dbReference type="GO" id="GO:0005737">
    <property type="term" value="C:cytoplasm"/>
    <property type="evidence" value="ECO:0007669"/>
    <property type="project" value="UniProtKB-SubCell"/>
</dbReference>
<dbReference type="GO" id="GO:0004055">
    <property type="term" value="F:argininosuccinate synthase activity"/>
    <property type="evidence" value="ECO:0007669"/>
    <property type="project" value="UniProtKB-UniRule"/>
</dbReference>
<dbReference type="GO" id="GO:0005524">
    <property type="term" value="F:ATP binding"/>
    <property type="evidence" value="ECO:0007669"/>
    <property type="project" value="UniProtKB-UniRule"/>
</dbReference>
<dbReference type="GO" id="GO:0000053">
    <property type="term" value="P:argininosuccinate metabolic process"/>
    <property type="evidence" value="ECO:0007669"/>
    <property type="project" value="TreeGrafter"/>
</dbReference>
<dbReference type="GO" id="GO:0006526">
    <property type="term" value="P:L-arginine biosynthetic process"/>
    <property type="evidence" value="ECO:0007669"/>
    <property type="project" value="UniProtKB-UniRule"/>
</dbReference>
<dbReference type="GO" id="GO:0000050">
    <property type="term" value="P:urea cycle"/>
    <property type="evidence" value="ECO:0007669"/>
    <property type="project" value="TreeGrafter"/>
</dbReference>
<dbReference type="CDD" id="cd01999">
    <property type="entry name" value="ASS"/>
    <property type="match status" value="1"/>
</dbReference>
<dbReference type="FunFam" id="3.40.50.620:FF:000019">
    <property type="entry name" value="Argininosuccinate synthase"/>
    <property type="match status" value="1"/>
</dbReference>
<dbReference type="FunFam" id="3.90.1260.10:FF:000007">
    <property type="entry name" value="Argininosuccinate synthase"/>
    <property type="match status" value="1"/>
</dbReference>
<dbReference type="Gene3D" id="3.90.1260.10">
    <property type="entry name" value="Argininosuccinate synthetase, chain A, domain 2"/>
    <property type="match status" value="1"/>
</dbReference>
<dbReference type="Gene3D" id="3.40.50.620">
    <property type="entry name" value="HUPs"/>
    <property type="match status" value="1"/>
</dbReference>
<dbReference type="Gene3D" id="1.20.5.470">
    <property type="entry name" value="Single helix bin"/>
    <property type="match status" value="1"/>
</dbReference>
<dbReference type="HAMAP" id="MF_00005">
    <property type="entry name" value="Arg_succ_synth_type1"/>
    <property type="match status" value="1"/>
</dbReference>
<dbReference type="InterPro" id="IPR048268">
    <property type="entry name" value="Arginosuc_syn_C"/>
</dbReference>
<dbReference type="InterPro" id="IPR048267">
    <property type="entry name" value="Arginosuc_syn_N"/>
</dbReference>
<dbReference type="InterPro" id="IPR001518">
    <property type="entry name" value="Arginosuc_synth"/>
</dbReference>
<dbReference type="InterPro" id="IPR018223">
    <property type="entry name" value="Arginosuc_synth_CS"/>
</dbReference>
<dbReference type="InterPro" id="IPR023434">
    <property type="entry name" value="Arginosuc_synth_type_1_subfam"/>
</dbReference>
<dbReference type="InterPro" id="IPR024074">
    <property type="entry name" value="AS_cat/multimer_dom_body"/>
</dbReference>
<dbReference type="InterPro" id="IPR014729">
    <property type="entry name" value="Rossmann-like_a/b/a_fold"/>
</dbReference>
<dbReference type="NCBIfam" id="TIGR00032">
    <property type="entry name" value="argG"/>
    <property type="match status" value="1"/>
</dbReference>
<dbReference type="NCBIfam" id="NF001770">
    <property type="entry name" value="PRK00509.1"/>
    <property type="match status" value="1"/>
</dbReference>
<dbReference type="PANTHER" id="PTHR11587">
    <property type="entry name" value="ARGININOSUCCINATE SYNTHASE"/>
    <property type="match status" value="1"/>
</dbReference>
<dbReference type="PANTHER" id="PTHR11587:SF2">
    <property type="entry name" value="ARGININOSUCCINATE SYNTHASE"/>
    <property type="match status" value="1"/>
</dbReference>
<dbReference type="Pfam" id="PF20979">
    <property type="entry name" value="Arginosuc_syn_C"/>
    <property type="match status" value="1"/>
</dbReference>
<dbReference type="Pfam" id="PF00764">
    <property type="entry name" value="Arginosuc_synth"/>
    <property type="match status" value="1"/>
</dbReference>
<dbReference type="SUPFAM" id="SSF52402">
    <property type="entry name" value="Adenine nucleotide alpha hydrolases-like"/>
    <property type="match status" value="1"/>
</dbReference>
<dbReference type="SUPFAM" id="SSF69864">
    <property type="entry name" value="Argininosuccinate synthetase, C-terminal domain"/>
    <property type="match status" value="1"/>
</dbReference>
<dbReference type="PROSITE" id="PS00564">
    <property type="entry name" value="ARGININOSUCCIN_SYN_1"/>
    <property type="match status" value="1"/>
</dbReference>
<dbReference type="PROSITE" id="PS00565">
    <property type="entry name" value="ARGININOSUCCIN_SYN_2"/>
    <property type="match status" value="1"/>
</dbReference>
<protein>
    <recommendedName>
        <fullName evidence="1">Argininosuccinate synthase</fullName>
        <ecNumber evidence="1">6.3.4.5</ecNumber>
    </recommendedName>
    <alternativeName>
        <fullName evidence="1">Citrulline--aspartate ligase</fullName>
    </alternativeName>
</protein>
<proteinExistence type="inferred from homology"/>